<comment type="function">
    <text evidence="1">Part of the ABC transporter complex MetNIQ involved in methionine import. Responsible for energy coupling to the transport system.</text>
</comment>
<comment type="catalytic activity">
    <reaction evidence="1">
        <text>L-methionine(out) + ATP + H2O = L-methionine(in) + ADP + phosphate + H(+)</text>
        <dbReference type="Rhea" id="RHEA:29779"/>
        <dbReference type="ChEBI" id="CHEBI:15377"/>
        <dbReference type="ChEBI" id="CHEBI:15378"/>
        <dbReference type="ChEBI" id="CHEBI:30616"/>
        <dbReference type="ChEBI" id="CHEBI:43474"/>
        <dbReference type="ChEBI" id="CHEBI:57844"/>
        <dbReference type="ChEBI" id="CHEBI:456216"/>
        <dbReference type="EC" id="7.4.2.11"/>
    </reaction>
</comment>
<comment type="catalytic activity">
    <reaction evidence="1">
        <text>D-methionine(out) + ATP + H2O = D-methionine(in) + ADP + phosphate + H(+)</text>
        <dbReference type="Rhea" id="RHEA:29767"/>
        <dbReference type="ChEBI" id="CHEBI:15377"/>
        <dbReference type="ChEBI" id="CHEBI:15378"/>
        <dbReference type="ChEBI" id="CHEBI:30616"/>
        <dbReference type="ChEBI" id="CHEBI:43474"/>
        <dbReference type="ChEBI" id="CHEBI:57932"/>
        <dbReference type="ChEBI" id="CHEBI:456216"/>
        <dbReference type="EC" id="7.4.2.11"/>
    </reaction>
</comment>
<comment type="subunit">
    <text evidence="1">The complex is composed of two ATP-binding proteins (MetN), two transmembrane proteins (MetI) and a solute-binding protein (MetQ).</text>
</comment>
<comment type="subcellular location">
    <subcellularLocation>
        <location evidence="1">Cell membrane</location>
        <topology evidence="1">Peripheral membrane protein</topology>
    </subcellularLocation>
</comment>
<comment type="similarity">
    <text evidence="1">Belongs to the ABC transporter superfamily. Methionine importer (TC 3.A.1.24) family.</text>
</comment>
<organism>
    <name type="scientific">Clostridium acetobutylicum (strain ATCC 824 / DSM 792 / JCM 1419 / IAM 19013 / LMG 5710 / NBRC 13948 / NRRL B-527 / VKM B-1787 / 2291 / W)</name>
    <dbReference type="NCBI Taxonomy" id="272562"/>
    <lineage>
        <taxon>Bacteria</taxon>
        <taxon>Bacillati</taxon>
        <taxon>Bacillota</taxon>
        <taxon>Clostridia</taxon>
        <taxon>Eubacteriales</taxon>
        <taxon>Clostridiaceae</taxon>
        <taxon>Clostridium</taxon>
    </lineage>
</organism>
<protein>
    <recommendedName>
        <fullName evidence="1">Methionine import ATP-binding protein MetN</fullName>
        <ecNumber evidence="1">7.4.2.11</ecNumber>
    </recommendedName>
</protein>
<keyword id="KW-0029">Amino-acid transport</keyword>
<keyword id="KW-0067">ATP-binding</keyword>
<keyword id="KW-1003">Cell membrane</keyword>
<keyword id="KW-0472">Membrane</keyword>
<keyword id="KW-0547">Nucleotide-binding</keyword>
<keyword id="KW-1185">Reference proteome</keyword>
<keyword id="KW-1278">Translocase</keyword>
<keyword id="KW-0813">Transport</keyword>
<name>METN_CLOAB</name>
<accession>Q97KD5</accession>
<sequence length="320" mass="35490">MIEIKNVSKYFSGNKVLKDVDLKIKGGEIFGIVGHSGAGKSTLLRCINGLETYDEGNVIVFGKDLKQINGKNLREFRKEVGMIFQNFNLLNRKDVYHNISLPLEVWGVPKNEIASRVKELLELVDLTDKIHSKPSNLSGGQKQRVAIARALALNPKILLCDEATSALDPNTTKSILNLLRTINSKLGITIVIVTHQMEVVKGICERVALIDAGVIKETGDVENLFLNPSSEMKKLIGQSDDDVLPKEGINIRVIFPKNSSEGALITSMARELNVDFSIVWGKLERFRDDVLGSLVINISEENKEVICNYLVSHNAIWEVA</sequence>
<gene>
    <name evidence="1" type="primary">metN</name>
    <name type="ordered locus">CA_C0984</name>
</gene>
<reference key="1">
    <citation type="journal article" date="2001" name="J. Bacteriol.">
        <title>Genome sequence and comparative analysis of the solvent-producing bacterium Clostridium acetobutylicum.</title>
        <authorList>
            <person name="Noelling J."/>
            <person name="Breton G."/>
            <person name="Omelchenko M.V."/>
            <person name="Makarova K.S."/>
            <person name="Zeng Q."/>
            <person name="Gibson R."/>
            <person name="Lee H.M."/>
            <person name="Dubois J."/>
            <person name="Qiu D."/>
            <person name="Hitti J."/>
            <person name="Wolf Y.I."/>
            <person name="Tatusov R.L."/>
            <person name="Sabathe F."/>
            <person name="Doucette-Stamm L.A."/>
            <person name="Soucaille P."/>
            <person name="Daly M.J."/>
            <person name="Bennett G.N."/>
            <person name="Koonin E.V."/>
            <person name="Smith D.R."/>
        </authorList>
    </citation>
    <scope>NUCLEOTIDE SEQUENCE [LARGE SCALE GENOMIC DNA]</scope>
    <source>
        <strain>ATCC 824 / DSM 792 / JCM 1419 / IAM 19013 / LMG 5710 / NBRC 13948 / NRRL B-527 / VKM B-1787 / 2291 / W</strain>
    </source>
</reference>
<feature type="chain" id="PRO_0000270283" description="Methionine import ATP-binding protein MetN">
    <location>
        <begin position="1"/>
        <end position="320"/>
    </location>
</feature>
<feature type="domain" description="ABC transporter" evidence="1">
    <location>
        <begin position="2"/>
        <end position="237"/>
    </location>
</feature>
<feature type="binding site" evidence="1">
    <location>
        <begin position="34"/>
        <end position="41"/>
    </location>
    <ligand>
        <name>ATP</name>
        <dbReference type="ChEBI" id="CHEBI:30616"/>
    </ligand>
</feature>
<proteinExistence type="inferred from homology"/>
<dbReference type="EC" id="7.4.2.11" evidence="1"/>
<dbReference type="EMBL" id="AE001437">
    <property type="protein sequence ID" value="AAK78960.1"/>
    <property type="molecule type" value="Genomic_DNA"/>
</dbReference>
<dbReference type="PIR" id="E97021">
    <property type="entry name" value="E97021"/>
</dbReference>
<dbReference type="RefSeq" id="NP_347620.1">
    <property type="nucleotide sequence ID" value="NC_003030.1"/>
</dbReference>
<dbReference type="RefSeq" id="WP_010964302.1">
    <property type="nucleotide sequence ID" value="NC_003030.1"/>
</dbReference>
<dbReference type="SMR" id="Q97KD5"/>
<dbReference type="STRING" id="272562.CA_C0984"/>
<dbReference type="KEGG" id="cac:CA_C0984"/>
<dbReference type="PATRIC" id="fig|272562.8.peg.1193"/>
<dbReference type="eggNOG" id="COG1135">
    <property type="taxonomic scope" value="Bacteria"/>
</dbReference>
<dbReference type="HOGENOM" id="CLU_000604_1_3_9"/>
<dbReference type="OrthoDB" id="9804199at2"/>
<dbReference type="Proteomes" id="UP000000814">
    <property type="component" value="Chromosome"/>
</dbReference>
<dbReference type="GO" id="GO:0005886">
    <property type="term" value="C:plasma membrane"/>
    <property type="evidence" value="ECO:0007669"/>
    <property type="project" value="UniProtKB-SubCell"/>
</dbReference>
<dbReference type="GO" id="GO:0033232">
    <property type="term" value="F:ABC-type D-methionine transporter activity"/>
    <property type="evidence" value="ECO:0007669"/>
    <property type="project" value="UniProtKB-EC"/>
</dbReference>
<dbReference type="GO" id="GO:0005524">
    <property type="term" value="F:ATP binding"/>
    <property type="evidence" value="ECO:0007669"/>
    <property type="project" value="UniProtKB-KW"/>
</dbReference>
<dbReference type="GO" id="GO:0016887">
    <property type="term" value="F:ATP hydrolysis activity"/>
    <property type="evidence" value="ECO:0007669"/>
    <property type="project" value="InterPro"/>
</dbReference>
<dbReference type="CDD" id="cd03258">
    <property type="entry name" value="ABC_MetN_methionine_transporter"/>
    <property type="match status" value="1"/>
</dbReference>
<dbReference type="FunFam" id="3.40.50.300:FF:000056">
    <property type="entry name" value="Cell division ATP-binding protein FtsE"/>
    <property type="match status" value="1"/>
</dbReference>
<dbReference type="Gene3D" id="3.30.70.260">
    <property type="match status" value="1"/>
</dbReference>
<dbReference type="Gene3D" id="3.40.50.300">
    <property type="entry name" value="P-loop containing nucleotide triphosphate hydrolases"/>
    <property type="match status" value="1"/>
</dbReference>
<dbReference type="InterPro" id="IPR003593">
    <property type="entry name" value="AAA+_ATPase"/>
</dbReference>
<dbReference type="InterPro" id="IPR003439">
    <property type="entry name" value="ABC_transporter-like_ATP-bd"/>
</dbReference>
<dbReference type="InterPro" id="IPR017871">
    <property type="entry name" value="ABC_transporter-like_CS"/>
</dbReference>
<dbReference type="InterPro" id="IPR045865">
    <property type="entry name" value="ACT-like_dom_sf"/>
</dbReference>
<dbReference type="InterPro" id="IPR041701">
    <property type="entry name" value="MetN_ABC"/>
</dbReference>
<dbReference type="InterPro" id="IPR050086">
    <property type="entry name" value="MetN_ABC_transporter-like"/>
</dbReference>
<dbReference type="InterPro" id="IPR018449">
    <property type="entry name" value="NIL_domain"/>
</dbReference>
<dbReference type="InterPro" id="IPR027417">
    <property type="entry name" value="P-loop_NTPase"/>
</dbReference>
<dbReference type="PANTHER" id="PTHR43166">
    <property type="entry name" value="AMINO ACID IMPORT ATP-BINDING PROTEIN"/>
    <property type="match status" value="1"/>
</dbReference>
<dbReference type="PANTHER" id="PTHR43166:SF30">
    <property type="entry name" value="METHIONINE IMPORT ATP-BINDING PROTEIN METN"/>
    <property type="match status" value="1"/>
</dbReference>
<dbReference type="Pfam" id="PF00005">
    <property type="entry name" value="ABC_tran"/>
    <property type="match status" value="1"/>
</dbReference>
<dbReference type="Pfam" id="PF09383">
    <property type="entry name" value="NIL"/>
    <property type="match status" value="1"/>
</dbReference>
<dbReference type="SMART" id="SM00382">
    <property type="entry name" value="AAA"/>
    <property type="match status" value="1"/>
</dbReference>
<dbReference type="SMART" id="SM00930">
    <property type="entry name" value="NIL"/>
    <property type="match status" value="1"/>
</dbReference>
<dbReference type="SUPFAM" id="SSF55021">
    <property type="entry name" value="ACT-like"/>
    <property type="match status" value="1"/>
</dbReference>
<dbReference type="SUPFAM" id="SSF52540">
    <property type="entry name" value="P-loop containing nucleoside triphosphate hydrolases"/>
    <property type="match status" value="1"/>
</dbReference>
<dbReference type="PROSITE" id="PS00211">
    <property type="entry name" value="ABC_TRANSPORTER_1"/>
    <property type="match status" value="1"/>
</dbReference>
<dbReference type="PROSITE" id="PS50893">
    <property type="entry name" value="ABC_TRANSPORTER_2"/>
    <property type="match status" value="1"/>
</dbReference>
<dbReference type="PROSITE" id="PS51264">
    <property type="entry name" value="METN"/>
    <property type="match status" value="1"/>
</dbReference>
<evidence type="ECO:0000255" key="1">
    <source>
        <dbReference type="HAMAP-Rule" id="MF_01719"/>
    </source>
</evidence>